<proteinExistence type="inferred from homology"/>
<gene>
    <name evidence="1" type="primary">rlmC</name>
    <name type="synonym">rumB</name>
    <name type="ordered locus">SBO_0793</name>
</gene>
<name>RLMC_SHIBS</name>
<sequence length="375" mass="41955">MQCALYDAGRCRSCQWITQPIPEQLSAKTADLKNLLADFPVEEWCAPVSGPEQGFRNKAKMVVSGSVEKPLLGMLHRDGTPEDLCDCPLYPASFAPVFAALKPFIARAGLTPYNVARKRGELKYILLTESQSDGGMMLRFVLRSETKLAQLRKALPWLQEQLPQLKVITVNIQPVHMAIMEGETEIYLTEQQALAERFNDVPLWIRPQSFFQTNPAVASQLYATARDWVRQLPVKHMWDLFCGVGGFGLHCATPDMQLTGIEIAPEAIACAKQSAAELGLTRLQFQALDSTQFATAQGEVPELVLVNPPRRGIGKPLCDYLSTMAPRFIIYSSCNAQTMAKDIRELPGFRIERVQLFDMFPHTAHYEVLTLLVKQ</sequence>
<accession>Q323P2</accession>
<dbReference type="EC" id="2.1.1.189" evidence="1"/>
<dbReference type="EMBL" id="CP000036">
    <property type="protein sequence ID" value="ABB65466.1"/>
    <property type="molecule type" value="Genomic_DNA"/>
</dbReference>
<dbReference type="RefSeq" id="WP_001149727.1">
    <property type="nucleotide sequence ID" value="NC_007613.1"/>
</dbReference>
<dbReference type="SMR" id="Q323P2"/>
<dbReference type="KEGG" id="sbo:SBO_0793"/>
<dbReference type="HOGENOM" id="CLU_014689_0_0_6"/>
<dbReference type="Proteomes" id="UP000007067">
    <property type="component" value="Chromosome"/>
</dbReference>
<dbReference type="GO" id="GO:0051539">
    <property type="term" value="F:4 iron, 4 sulfur cluster binding"/>
    <property type="evidence" value="ECO:0007669"/>
    <property type="project" value="UniProtKB-KW"/>
</dbReference>
<dbReference type="GO" id="GO:0005506">
    <property type="term" value="F:iron ion binding"/>
    <property type="evidence" value="ECO:0007669"/>
    <property type="project" value="UniProtKB-UniRule"/>
</dbReference>
<dbReference type="GO" id="GO:0070041">
    <property type="term" value="F:rRNA (uridine-C5-)-methyltransferase activity"/>
    <property type="evidence" value="ECO:0007669"/>
    <property type="project" value="UniProtKB-UniRule"/>
</dbReference>
<dbReference type="GO" id="GO:0070475">
    <property type="term" value="P:rRNA base methylation"/>
    <property type="evidence" value="ECO:0007669"/>
    <property type="project" value="TreeGrafter"/>
</dbReference>
<dbReference type="CDD" id="cd02440">
    <property type="entry name" value="AdoMet_MTases"/>
    <property type="match status" value="1"/>
</dbReference>
<dbReference type="FunFam" id="2.40.50.1070:FF:000002">
    <property type="entry name" value="23S rRNA (uracil(747)-C(5))-methyltransferase RlmC"/>
    <property type="match status" value="1"/>
</dbReference>
<dbReference type="FunFam" id="3.40.50.150:FF:000049">
    <property type="entry name" value="23S rRNA (uracil(747)-C(5))-methyltransferase RlmC"/>
    <property type="match status" value="1"/>
</dbReference>
<dbReference type="Gene3D" id="2.40.50.1070">
    <property type="match status" value="1"/>
</dbReference>
<dbReference type="Gene3D" id="3.40.50.150">
    <property type="entry name" value="Vaccinia Virus protein VP39"/>
    <property type="match status" value="1"/>
</dbReference>
<dbReference type="HAMAP" id="MF_01012">
    <property type="entry name" value="23SrRNA_methyltr_RlmC"/>
    <property type="match status" value="1"/>
</dbReference>
<dbReference type="InterPro" id="IPR011825">
    <property type="entry name" value="23SrRNA_MeTrfase_RlmC"/>
</dbReference>
<dbReference type="InterPro" id="IPR030390">
    <property type="entry name" value="MeTrfase_TrmA_AS"/>
</dbReference>
<dbReference type="InterPro" id="IPR030391">
    <property type="entry name" value="MeTrfase_TrmA_CS"/>
</dbReference>
<dbReference type="InterPro" id="IPR029063">
    <property type="entry name" value="SAM-dependent_MTases_sf"/>
</dbReference>
<dbReference type="InterPro" id="IPR010280">
    <property type="entry name" value="U5_MeTrfase_fam"/>
</dbReference>
<dbReference type="NCBIfam" id="TIGR02085">
    <property type="entry name" value="meth_trns_rumB"/>
    <property type="match status" value="1"/>
</dbReference>
<dbReference type="PANTHER" id="PTHR11061">
    <property type="entry name" value="RNA M5U METHYLTRANSFERASE"/>
    <property type="match status" value="1"/>
</dbReference>
<dbReference type="PANTHER" id="PTHR11061:SF30">
    <property type="entry name" value="TRNA (URACIL(54)-C(5))-METHYLTRANSFERASE"/>
    <property type="match status" value="1"/>
</dbReference>
<dbReference type="Pfam" id="PF05958">
    <property type="entry name" value="tRNA_U5-meth_tr"/>
    <property type="match status" value="1"/>
</dbReference>
<dbReference type="SUPFAM" id="SSF53335">
    <property type="entry name" value="S-adenosyl-L-methionine-dependent methyltransferases"/>
    <property type="match status" value="1"/>
</dbReference>
<dbReference type="PROSITE" id="PS51687">
    <property type="entry name" value="SAM_MT_RNA_M5U"/>
    <property type="match status" value="1"/>
</dbReference>
<dbReference type="PROSITE" id="PS01230">
    <property type="entry name" value="TRMA_1"/>
    <property type="match status" value="1"/>
</dbReference>
<dbReference type="PROSITE" id="PS01231">
    <property type="entry name" value="TRMA_2"/>
    <property type="match status" value="1"/>
</dbReference>
<keyword id="KW-0004">4Fe-4S</keyword>
<keyword id="KW-0408">Iron</keyword>
<keyword id="KW-0411">Iron-sulfur</keyword>
<keyword id="KW-0479">Metal-binding</keyword>
<keyword id="KW-0489">Methyltransferase</keyword>
<keyword id="KW-0698">rRNA processing</keyword>
<keyword id="KW-0949">S-adenosyl-L-methionine</keyword>
<keyword id="KW-0808">Transferase</keyword>
<reference key="1">
    <citation type="journal article" date="2005" name="Nucleic Acids Res.">
        <title>Genome dynamics and diversity of Shigella species, the etiologic agents of bacillary dysentery.</title>
        <authorList>
            <person name="Yang F."/>
            <person name="Yang J."/>
            <person name="Zhang X."/>
            <person name="Chen L."/>
            <person name="Jiang Y."/>
            <person name="Yan Y."/>
            <person name="Tang X."/>
            <person name="Wang J."/>
            <person name="Xiong Z."/>
            <person name="Dong J."/>
            <person name="Xue Y."/>
            <person name="Zhu Y."/>
            <person name="Xu X."/>
            <person name="Sun L."/>
            <person name="Chen S."/>
            <person name="Nie H."/>
            <person name="Peng J."/>
            <person name="Xu J."/>
            <person name="Wang Y."/>
            <person name="Yuan Z."/>
            <person name="Wen Y."/>
            <person name="Yao Z."/>
            <person name="Shen Y."/>
            <person name="Qiang B."/>
            <person name="Hou Y."/>
            <person name="Yu J."/>
            <person name="Jin Q."/>
        </authorList>
    </citation>
    <scope>NUCLEOTIDE SEQUENCE [LARGE SCALE GENOMIC DNA]</scope>
    <source>
        <strain>Sb227</strain>
    </source>
</reference>
<organism>
    <name type="scientific">Shigella boydii serotype 4 (strain Sb227)</name>
    <dbReference type="NCBI Taxonomy" id="300268"/>
    <lineage>
        <taxon>Bacteria</taxon>
        <taxon>Pseudomonadati</taxon>
        <taxon>Pseudomonadota</taxon>
        <taxon>Gammaproteobacteria</taxon>
        <taxon>Enterobacterales</taxon>
        <taxon>Enterobacteriaceae</taxon>
        <taxon>Shigella</taxon>
    </lineage>
</organism>
<comment type="function">
    <text evidence="1">Catalyzes the formation of 5-methyl-uridine at position 747 (m5U747) in 23S rRNA.</text>
</comment>
<comment type="catalytic activity">
    <reaction evidence="1">
        <text>uridine(747) in 23S rRNA + S-adenosyl-L-methionine = 5-methyluridine(747) in 23S rRNA + S-adenosyl-L-homocysteine + H(+)</text>
        <dbReference type="Rhea" id="RHEA:42628"/>
        <dbReference type="Rhea" id="RHEA-COMP:10154"/>
        <dbReference type="Rhea" id="RHEA-COMP:10155"/>
        <dbReference type="ChEBI" id="CHEBI:15378"/>
        <dbReference type="ChEBI" id="CHEBI:57856"/>
        <dbReference type="ChEBI" id="CHEBI:59789"/>
        <dbReference type="ChEBI" id="CHEBI:65315"/>
        <dbReference type="ChEBI" id="CHEBI:74447"/>
        <dbReference type="EC" id="2.1.1.189"/>
    </reaction>
</comment>
<comment type="similarity">
    <text evidence="1">Belongs to the class I-like SAM-binding methyltransferase superfamily. RNA M5U methyltransferase family. RlmC subfamily.</text>
</comment>
<evidence type="ECO:0000255" key="1">
    <source>
        <dbReference type="HAMAP-Rule" id="MF_01012"/>
    </source>
</evidence>
<feature type="chain" id="PRO_0000282018" description="23S rRNA (uracil(747)-C(5))-methyltransferase RlmC">
    <location>
        <begin position="1"/>
        <end position="375"/>
    </location>
</feature>
<feature type="active site" description="Nucleophile" evidence="1">
    <location>
        <position position="334"/>
    </location>
</feature>
<feature type="binding site" evidence="1">
    <location>
        <position position="3"/>
    </location>
    <ligand>
        <name>[4Fe-4S] cluster</name>
        <dbReference type="ChEBI" id="CHEBI:49883"/>
    </ligand>
</feature>
<feature type="binding site" evidence="1">
    <location>
        <position position="11"/>
    </location>
    <ligand>
        <name>[4Fe-4S] cluster</name>
        <dbReference type="ChEBI" id="CHEBI:49883"/>
    </ligand>
</feature>
<feature type="binding site" evidence="1">
    <location>
        <position position="14"/>
    </location>
    <ligand>
        <name>[4Fe-4S] cluster</name>
        <dbReference type="ChEBI" id="CHEBI:49883"/>
    </ligand>
</feature>
<feature type="binding site" evidence="1">
    <location>
        <position position="87"/>
    </location>
    <ligand>
        <name>[4Fe-4S] cluster</name>
        <dbReference type="ChEBI" id="CHEBI:49883"/>
    </ligand>
</feature>
<feature type="binding site" evidence="1">
    <location>
        <position position="212"/>
    </location>
    <ligand>
        <name>S-adenosyl-L-methionine</name>
        <dbReference type="ChEBI" id="CHEBI:59789"/>
    </ligand>
</feature>
<feature type="binding site" evidence="1">
    <location>
        <position position="241"/>
    </location>
    <ligand>
        <name>S-adenosyl-L-methionine</name>
        <dbReference type="ChEBI" id="CHEBI:59789"/>
    </ligand>
</feature>
<feature type="binding site" evidence="1">
    <location>
        <position position="262"/>
    </location>
    <ligand>
        <name>S-adenosyl-L-methionine</name>
        <dbReference type="ChEBI" id="CHEBI:59789"/>
    </ligand>
</feature>
<feature type="binding site" evidence="1">
    <location>
        <position position="307"/>
    </location>
    <ligand>
        <name>S-adenosyl-L-methionine</name>
        <dbReference type="ChEBI" id="CHEBI:59789"/>
    </ligand>
</feature>
<protein>
    <recommendedName>
        <fullName evidence="1">23S rRNA (uracil(747)-C(5))-methyltransferase RlmC</fullName>
        <ecNumber evidence="1">2.1.1.189</ecNumber>
    </recommendedName>
    <alternativeName>
        <fullName evidence="1">23S rRNA(m5U747)-methyltransferase</fullName>
    </alternativeName>
</protein>